<name>NS2A_CVBEN</name>
<proteinExistence type="inferred from homology"/>
<comment type="similarity">
    <text evidence="1">Belongs to the coronaviruses ns2a protein family.</text>
</comment>
<feature type="chain" id="PRO_0000283932" description="Non-structural protein 2a">
    <location>
        <begin position="1"/>
        <end position="278"/>
    </location>
</feature>
<accession>Q91A27</accession>
<organismHost>
    <name type="scientific">Bos taurus</name>
    <name type="common">Bovine</name>
    <dbReference type="NCBI Taxonomy" id="9913"/>
</organismHost>
<dbReference type="EMBL" id="AF391541">
    <property type="protein sequence ID" value="AAK83354.1"/>
    <property type="molecule type" value="Genomic_RNA"/>
</dbReference>
<dbReference type="SMR" id="Q91A27"/>
<dbReference type="KEGG" id="vg:921690"/>
<dbReference type="Proteomes" id="UP000008570">
    <property type="component" value="Segment"/>
</dbReference>
<dbReference type="Gene3D" id="3.90.1140.10">
    <property type="entry name" value="Cyclic phosphodiesterase"/>
    <property type="match status" value="1"/>
</dbReference>
<dbReference type="InterPro" id="IPR007878">
    <property type="entry name" value="Coronavirus_NS2A"/>
</dbReference>
<dbReference type="InterPro" id="IPR039573">
    <property type="entry name" value="NS2A-like"/>
</dbReference>
<dbReference type="Pfam" id="PF05213">
    <property type="entry name" value="Corona_NS2A"/>
    <property type="match status" value="1"/>
</dbReference>
<dbReference type="PIRSF" id="PIRSF003890">
    <property type="entry name" value="LigT_coronavirus"/>
    <property type="match status" value="1"/>
</dbReference>
<sequence length="278" mass="32255">MAVAYADKPNHFINFPLTQFQGFVLNYKGLQFQLLDEGVDCKIQTAPHISLAMLDIQPEDYRSVDVAIQEVIDDMHWGEGFQIKFENPHILGRCIVLDVKGVEELHDDLVNYIRDKGCVADQSRKWIGHCTIAQLTDAALSIKENVDFINNMQFNYKITINPSSPARLEIVKLGAERKDGFYETIASHWMGIRFEYNPPTDKLAMIMGYCCLEVVRKELEEGDLPENDDDAWFKLSYHYENNSWFFRHVYRKSSYFRKSCQNLDCNCLGFYESSVEED</sequence>
<organism>
    <name type="scientific">Bovine coronavirus (strain 98TXSF-110-ENT)</name>
    <name type="common">BCoV-ENT</name>
    <name type="synonym">BCV</name>
    <dbReference type="NCBI Taxonomy" id="233262"/>
    <lineage>
        <taxon>Viruses</taxon>
        <taxon>Riboviria</taxon>
        <taxon>Orthornavirae</taxon>
        <taxon>Pisuviricota</taxon>
        <taxon>Pisoniviricetes</taxon>
        <taxon>Nidovirales</taxon>
        <taxon>Cornidovirineae</taxon>
        <taxon>Coronaviridae</taxon>
        <taxon>Orthocoronavirinae</taxon>
        <taxon>Betacoronavirus</taxon>
        <taxon>Embecovirus</taxon>
        <taxon>Betacoronavirus 1</taxon>
    </lineage>
</organism>
<gene>
    <name type="ORF">2a</name>
</gene>
<protein>
    <recommendedName>
        <fullName>Non-structural protein 2a</fullName>
        <shortName>ns2a</shortName>
    </recommendedName>
    <alternativeName>
        <fullName>32 kDa accessory protein</fullName>
    </alternativeName>
    <alternativeName>
        <fullName>32 kDa non-structural protein</fullName>
    </alternativeName>
    <alternativeName>
        <fullName>ns2</fullName>
    </alternativeName>
</protein>
<reference key="1">
    <citation type="journal article" date="2001" name="J. Gen. Virol.">
        <title>Comparison of genomic and predicted amino acid sequences of respiratory and enteric bovine coronaviruses isolated from the same animal with fatal shipping pneumonia.</title>
        <authorList>
            <person name="Chouljenko V.N."/>
            <person name="Lin X.Q."/>
            <person name="Storz J."/>
            <person name="Kousoulas K.G."/>
            <person name="Gorbalenya A.E."/>
        </authorList>
    </citation>
    <scope>NUCLEOTIDE SEQUENCE [GENOMIC RNA]</scope>
</reference>
<evidence type="ECO:0000305" key="1"/>